<organism evidence="9">
    <name type="scientific">Oryza sativa subsp. japonica</name>
    <name type="common">Rice</name>
    <dbReference type="NCBI Taxonomy" id="39947"/>
    <lineage>
        <taxon>Eukaryota</taxon>
        <taxon>Viridiplantae</taxon>
        <taxon>Streptophyta</taxon>
        <taxon>Embryophyta</taxon>
        <taxon>Tracheophyta</taxon>
        <taxon>Spermatophyta</taxon>
        <taxon>Magnoliopsida</taxon>
        <taxon>Liliopsida</taxon>
        <taxon>Poales</taxon>
        <taxon>Poaceae</taxon>
        <taxon>BOP clade</taxon>
        <taxon>Oryzoideae</taxon>
        <taxon>Oryzeae</taxon>
        <taxon>Oryzinae</taxon>
        <taxon>Oryza</taxon>
        <taxon>Oryza sativa</taxon>
    </lineage>
</organism>
<feature type="chain" id="PRO_0000431881" description="Inositol-pentakisphosphate 2-kinase IPK1">
    <location>
        <begin position="1"/>
        <end position="445"/>
    </location>
</feature>
<feature type="short sequence motif" description="EXKPK motif" evidence="1">
    <location>
        <begin position="162"/>
        <end position="166"/>
    </location>
</feature>
<feature type="binding site" evidence="1">
    <location>
        <begin position="19"/>
        <end position="22"/>
    </location>
    <ligand>
        <name>ATP</name>
        <dbReference type="ChEBI" id="CHEBI:30616"/>
    </ligand>
</feature>
<feature type="binding site" evidence="1">
    <location>
        <position position="40"/>
    </location>
    <ligand>
        <name>ATP</name>
        <dbReference type="ChEBI" id="CHEBI:30616"/>
    </ligand>
</feature>
<feature type="binding site" evidence="1">
    <location>
        <position position="127"/>
    </location>
    <ligand>
        <name>substrate</name>
    </ligand>
</feature>
<feature type="binding site" evidence="1">
    <location>
        <begin position="144"/>
        <end position="146"/>
    </location>
    <ligand>
        <name>ATP</name>
        <dbReference type="ChEBI" id="CHEBI:30616"/>
    </ligand>
</feature>
<feature type="binding site" evidence="1">
    <location>
        <begin position="162"/>
        <end position="164"/>
    </location>
    <ligand>
        <name>ATP</name>
        <dbReference type="ChEBI" id="CHEBI:30616"/>
    </ligand>
</feature>
<feature type="binding site" evidence="1">
    <location>
        <position position="166"/>
    </location>
    <ligand>
        <name>substrate</name>
    </ligand>
</feature>
<feature type="binding site" evidence="1">
    <location>
        <position position="196"/>
    </location>
    <ligand>
        <name>substrate</name>
    </ligand>
</feature>
<feature type="binding site" evidence="1">
    <location>
        <position position="234"/>
    </location>
    <ligand>
        <name>substrate</name>
    </ligand>
</feature>
<feature type="binding site" evidence="1">
    <location>
        <position position="237"/>
    </location>
    <ligand>
        <name>ATP</name>
        <dbReference type="ChEBI" id="CHEBI:30616"/>
    </ligand>
</feature>
<feature type="binding site" evidence="1">
    <location>
        <position position="312"/>
    </location>
    <ligand>
        <name>Zn(2+)</name>
        <dbReference type="ChEBI" id="CHEBI:29105"/>
    </ligand>
</feature>
<feature type="binding site" evidence="1">
    <location>
        <position position="322"/>
    </location>
    <ligand>
        <name>Zn(2+)</name>
        <dbReference type="ChEBI" id="CHEBI:29105"/>
    </ligand>
</feature>
<feature type="binding site" evidence="1">
    <location>
        <position position="325"/>
    </location>
    <ligand>
        <name>Zn(2+)</name>
        <dbReference type="ChEBI" id="CHEBI:29105"/>
    </ligand>
</feature>
<feature type="binding site" evidence="1">
    <location>
        <position position="341"/>
    </location>
    <ligand>
        <name>Zn(2+)</name>
        <dbReference type="ChEBI" id="CHEBI:29105"/>
    </ligand>
</feature>
<feature type="binding site" evidence="1">
    <location>
        <position position="363"/>
    </location>
    <ligand>
        <name>substrate</name>
    </ligand>
</feature>
<feature type="binding site" evidence="1">
    <location>
        <position position="402"/>
    </location>
    <ligand>
        <name>ATP</name>
        <dbReference type="ChEBI" id="CHEBI:30616"/>
    </ligand>
</feature>
<feature type="binding site" evidence="1">
    <location>
        <position position="406"/>
    </location>
    <ligand>
        <name>substrate</name>
    </ligand>
</feature>
<feature type="binding site" evidence="1">
    <location>
        <position position="410"/>
    </location>
    <ligand>
        <name>substrate</name>
    </ligand>
</feature>
<feature type="binding site" evidence="1">
    <location>
        <position position="414"/>
    </location>
    <ligand>
        <name>substrate</name>
    </ligand>
</feature>
<accession>Q7XQZ6</accession>
<accession>A0A0P0WFU5</accession>
<reference key="1">
    <citation type="journal article" date="2002" name="Nature">
        <title>Sequence and analysis of rice chromosome 4.</title>
        <authorList>
            <person name="Feng Q."/>
            <person name="Zhang Y."/>
            <person name="Hao P."/>
            <person name="Wang S."/>
            <person name="Fu G."/>
            <person name="Huang Y."/>
            <person name="Li Y."/>
            <person name="Zhu J."/>
            <person name="Liu Y."/>
            <person name="Hu X."/>
            <person name="Jia P."/>
            <person name="Zhang Y."/>
            <person name="Zhao Q."/>
            <person name="Ying K."/>
            <person name="Yu S."/>
            <person name="Tang Y."/>
            <person name="Weng Q."/>
            <person name="Zhang L."/>
            <person name="Lu Y."/>
            <person name="Mu J."/>
            <person name="Lu Y."/>
            <person name="Zhang L.S."/>
            <person name="Yu Z."/>
            <person name="Fan D."/>
            <person name="Liu X."/>
            <person name="Lu T."/>
            <person name="Li C."/>
            <person name="Wu Y."/>
            <person name="Sun T."/>
            <person name="Lei H."/>
            <person name="Li T."/>
            <person name="Hu H."/>
            <person name="Guan J."/>
            <person name="Wu M."/>
            <person name="Zhang R."/>
            <person name="Zhou B."/>
            <person name="Chen Z."/>
            <person name="Chen L."/>
            <person name="Jin Z."/>
            <person name="Wang R."/>
            <person name="Yin H."/>
            <person name="Cai Z."/>
            <person name="Ren S."/>
            <person name="Lv G."/>
            <person name="Gu W."/>
            <person name="Zhu G."/>
            <person name="Tu Y."/>
            <person name="Jia J."/>
            <person name="Zhang Y."/>
            <person name="Chen J."/>
            <person name="Kang H."/>
            <person name="Chen X."/>
            <person name="Shao C."/>
            <person name="Sun Y."/>
            <person name="Hu Q."/>
            <person name="Zhang X."/>
            <person name="Zhang W."/>
            <person name="Wang L."/>
            <person name="Ding C."/>
            <person name="Sheng H."/>
            <person name="Gu J."/>
            <person name="Chen S."/>
            <person name="Ni L."/>
            <person name="Zhu F."/>
            <person name="Chen W."/>
            <person name="Lan L."/>
            <person name="Lai Y."/>
            <person name="Cheng Z."/>
            <person name="Gu M."/>
            <person name="Jiang J."/>
            <person name="Li J."/>
            <person name="Hong G."/>
            <person name="Xue Y."/>
            <person name="Han B."/>
        </authorList>
    </citation>
    <scope>NUCLEOTIDE SEQUENCE [LARGE SCALE GENOMIC DNA]</scope>
    <scope>GENOME REANNOTATION</scope>
    <source>
        <strain>cv. Nipponbare</strain>
    </source>
</reference>
<reference key="2">
    <citation type="journal article" date="2005" name="Nature">
        <title>The map-based sequence of the rice genome.</title>
        <authorList>
            <consortium name="International rice genome sequencing project (IRGSP)"/>
        </authorList>
    </citation>
    <scope>NUCLEOTIDE SEQUENCE [LARGE SCALE GENOMIC DNA]</scope>
    <source>
        <strain>cv. Nipponbare</strain>
    </source>
</reference>
<reference key="3">
    <citation type="journal article" date="2008" name="Nucleic Acids Res.">
        <title>The rice annotation project database (RAP-DB): 2008 update.</title>
        <authorList>
            <consortium name="The rice annotation project (RAP)"/>
        </authorList>
    </citation>
    <scope>GENOME REANNOTATION</scope>
    <source>
        <strain>cv. Nipponbare</strain>
    </source>
</reference>
<reference key="4">
    <citation type="journal article" date="2013" name="Rice">
        <title>Improvement of the Oryza sativa Nipponbare reference genome using next generation sequence and optical map data.</title>
        <authorList>
            <person name="Kawahara Y."/>
            <person name="de la Bastide M."/>
            <person name="Hamilton J.P."/>
            <person name="Kanamori H."/>
            <person name="McCombie W.R."/>
            <person name="Ouyang S."/>
            <person name="Schwartz D.C."/>
            <person name="Tanaka T."/>
            <person name="Wu J."/>
            <person name="Zhou S."/>
            <person name="Childs K.L."/>
            <person name="Davidson R.M."/>
            <person name="Lin H."/>
            <person name="Quesada-Ocampo L."/>
            <person name="Vaillancourt B."/>
            <person name="Sakai H."/>
            <person name="Lee S.S."/>
            <person name="Kim J."/>
            <person name="Numa H."/>
            <person name="Itoh T."/>
            <person name="Buell C.R."/>
            <person name="Matsumoto T."/>
        </authorList>
    </citation>
    <scope>GENOME REANNOTATION</scope>
    <source>
        <strain>cv. Nipponbare</strain>
    </source>
</reference>
<reference key="5">
    <citation type="journal article" date="2005" name="PLoS Biol.">
        <title>The genomes of Oryza sativa: a history of duplications.</title>
        <authorList>
            <person name="Yu J."/>
            <person name="Wang J."/>
            <person name="Lin W."/>
            <person name="Li S."/>
            <person name="Li H."/>
            <person name="Zhou J."/>
            <person name="Ni P."/>
            <person name="Dong W."/>
            <person name="Hu S."/>
            <person name="Zeng C."/>
            <person name="Zhang J."/>
            <person name="Zhang Y."/>
            <person name="Li R."/>
            <person name="Xu Z."/>
            <person name="Li S."/>
            <person name="Li X."/>
            <person name="Zheng H."/>
            <person name="Cong L."/>
            <person name="Lin L."/>
            <person name="Yin J."/>
            <person name="Geng J."/>
            <person name="Li G."/>
            <person name="Shi J."/>
            <person name="Liu J."/>
            <person name="Lv H."/>
            <person name="Li J."/>
            <person name="Wang J."/>
            <person name="Deng Y."/>
            <person name="Ran L."/>
            <person name="Shi X."/>
            <person name="Wang X."/>
            <person name="Wu Q."/>
            <person name="Li C."/>
            <person name="Ren X."/>
            <person name="Wang J."/>
            <person name="Wang X."/>
            <person name="Li D."/>
            <person name="Liu D."/>
            <person name="Zhang X."/>
            <person name="Ji Z."/>
            <person name="Zhao W."/>
            <person name="Sun Y."/>
            <person name="Zhang Z."/>
            <person name="Bao J."/>
            <person name="Han Y."/>
            <person name="Dong L."/>
            <person name="Ji J."/>
            <person name="Chen P."/>
            <person name="Wu S."/>
            <person name="Liu J."/>
            <person name="Xiao Y."/>
            <person name="Bu D."/>
            <person name="Tan J."/>
            <person name="Yang L."/>
            <person name="Ye C."/>
            <person name="Zhang J."/>
            <person name="Xu J."/>
            <person name="Zhou Y."/>
            <person name="Yu Y."/>
            <person name="Zhang B."/>
            <person name="Zhuang S."/>
            <person name="Wei H."/>
            <person name="Liu B."/>
            <person name="Lei M."/>
            <person name="Yu H."/>
            <person name="Li Y."/>
            <person name="Xu H."/>
            <person name="Wei S."/>
            <person name="He X."/>
            <person name="Fang L."/>
            <person name="Zhang Z."/>
            <person name="Zhang Y."/>
            <person name="Huang X."/>
            <person name="Su Z."/>
            <person name="Tong W."/>
            <person name="Li J."/>
            <person name="Tong Z."/>
            <person name="Li S."/>
            <person name="Ye J."/>
            <person name="Wang L."/>
            <person name="Fang L."/>
            <person name="Lei T."/>
            <person name="Chen C.-S."/>
            <person name="Chen H.-C."/>
            <person name="Xu Z."/>
            <person name="Li H."/>
            <person name="Huang H."/>
            <person name="Zhang F."/>
            <person name="Xu H."/>
            <person name="Li N."/>
            <person name="Zhao C."/>
            <person name="Li S."/>
            <person name="Dong L."/>
            <person name="Huang Y."/>
            <person name="Li L."/>
            <person name="Xi Y."/>
            <person name="Qi Q."/>
            <person name="Li W."/>
            <person name="Zhang B."/>
            <person name="Hu W."/>
            <person name="Zhang Y."/>
            <person name="Tian X."/>
            <person name="Jiao Y."/>
            <person name="Liang X."/>
            <person name="Jin J."/>
            <person name="Gao L."/>
            <person name="Zheng W."/>
            <person name="Hao B."/>
            <person name="Liu S.-M."/>
            <person name="Wang W."/>
            <person name="Yuan L."/>
            <person name="Cao M."/>
            <person name="McDermott J."/>
            <person name="Samudrala R."/>
            <person name="Wang J."/>
            <person name="Wong G.K.-S."/>
            <person name="Yang H."/>
        </authorList>
    </citation>
    <scope>NUCLEOTIDE SEQUENCE [LARGE SCALE GENOMIC DNA]</scope>
    <source>
        <strain>cv. Nipponbare</strain>
    </source>
</reference>
<reference key="6">
    <citation type="journal article" date="2003" name="Science">
        <title>Collection, mapping, and annotation of over 28,000 cDNA clones from japonica rice.</title>
        <authorList>
            <consortium name="The rice full-length cDNA consortium"/>
        </authorList>
    </citation>
    <scope>NUCLEOTIDE SEQUENCE [LARGE SCALE MRNA]</scope>
    <source>
        <strain>cv. Nipponbare</strain>
    </source>
</reference>
<reference key="7">
    <citation type="journal article" date="2007" name="Gene">
        <title>Expression pattern of inositol phosphate-related enzymes in rice (Oryza sativa L.): implications for the phytic acid biosynthetic pathway.</title>
        <authorList>
            <person name="Suzuki M."/>
            <person name="Tanaka K."/>
            <person name="Kuwano M."/>
            <person name="Yoshida K.T."/>
        </authorList>
    </citation>
    <scope>TISSUE SPECIFICITY</scope>
</reference>
<reference key="8">
    <citation type="journal article" date="2014" name="Plant Sci.">
        <title>Induction of phytic acid synthesis by abscisic acid in suspension-cultured cells of rice.</title>
        <authorList>
            <person name="Matsuno K."/>
            <person name="Fujimura T."/>
        </authorList>
    </citation>
    <scope>INDUCTION BY ABSCISIC ACID</scope>
</reference>
<dbReference type="EC" id="2.7.1.158" evidence="5"/>
<dbReference type="EMBL" id="AL606608">
    <property type="protein sequence ID" value="CAE02901.1"/>
    <property type="molecule type" value="Genomic_DNA"/>
</dbReference>
<dbReference type="EMBL" id="AP008210">
    <property type="protein sequence ID" value="BAF16061.1"/>
    <property type="molecule type" value="Genomic_DNA"/>
</dbReference>
<dbReference type="EMBL" id="AP014960">
    <property type="protein sequence ID" value="BAS91454.1"/>
    <property type="molecule type" value="Genomic_DNA"/>
</dbReference>
<dbReference type="EMBL" id="CM000141">
    <property type="protein sequence ID" value="EEE61843.1"/>
    <property type="molecule type" value="Genomic_DNA"/>
</dbReference>
<dbReference type="EMBL" id="AK102842">
    <property type="protein sequence ID" value="BAG95743.1"/>
    <property type="molecule type" value="mRNA"/>
</dbReference>
<dbReference type="RefSeq" id="XP_015633432.1">
    <property type="nucleotide sequence ID" value="XM_015777946.1"/>
</dbReference>
<dbReference type="RefSeq" id="XP_015633433.1">
    <property type="nucleotide sequence ID" value="XM_015777947.1"/>
</dbReference>
<dbReference type="SMR" id="Q7XQZ6"/>
<dbReference type="FunCoup" id="Q7XQZ6">
    <property type="interactions" value="1530"/>
</dbReference>
<dbReference type="STRING" id="39947.Q7XQZ6"/>
<dbReference type="PaxDb" id="39947-Q7XQZ6"/>
<dbReference type="DNASU" id="4337286"/>
<dbReference type="EnsemblPlants" id="Os04t0661200-01">
    <property type="protein sequence ID" value="Os04t0661200-01"/>
    <property type="gene ID" value="Os04g0661200"/>
</dbReference>
<dbReference type="Gramene" id="Os04t0661200-01">
    <property type="protein sequence ID" value="Os04t0661200-01"/>
    <property type="gene ID" value="Os04g0661200"/>
</dbReference>
<dbReference type="KEGG" id="dosa:Os04g0661200"/>
<dbReference type="eggNOG" id="KOG4749">
    <property type="taxonomic scope" value="Eukaryota"/>
</dbReference>
<dbReference type="HOGENOM" id="CLU_033188_1_0_1"/>
<dbReference type="InParanoid" id="Q7XQZ6"/>
<dbReference type="OMA" id="HRQHCIV"/>
<dbReference type="OrthoDB" id="272370at2759"/>
<dbReference type="Proteomes" id="UP000000763">
    <property type="component" value="Chromosome 4"/>
</dbReference>
<dbReference type="Proteomes" id="UP000007752">
    <property type="component" value="Chromosome 4"/>
</dbReference>
<dbReference type="Proteomes" id="UP000059680">
    <property type="component" value="Chromosome 4"/>
</dbReference>
<dbReference type="GO" id="GO:0005634">
    <property type="term" value="C:nucleus"/>
    <property type="evidence" value="ECO:0000318"/>
    <property type="project" value="GO_Central"/>
</dbReference>
<dbReference type="GO" id="GO:0005524">
    <property type="term" value="F:ATP binding"/>
    <property type="evidence" value="ECO:0007669"/>
    <property type="project" value="UniProtKB-KW"/>
</dbReference>
<dbReference type="GO" id="GO:0035299">
    <property type="term" value="F:inositol-1,3,4,5,6-pentakisphosphate 2-kinase activity"/>
    <property type="evidence" value="ECO:0000318"/>
    <property type="project" value="GO_Central"/>
</dbReference>
<dbReference type="GO" id="GO:0046872">
    <property type="term" value="F:metal ion binding"/>
    <property type="evidence" value="ECO:0007669"/>
    <property type="project" value="UniProtKB-KW"/>
</dbReference>
<dbReference type="GO" id="GO:0032958">
    <property type="term" value="P:inositol phosphate biosynthetic process"/>
    <property type="evidence" value="ECO:0000318"/>
    <property type="project" value="GO_Central"/>
</dbReference>
<dbReference type="FunFam" id="3.30.200.110:FF:000002">
    <property type="entry name" value="Inositol-pentakisphosphate 2-kinase"/>
    <property type="match status" value="1"/>
</dbReference>
<dbReference type="Gene3D" id="3.30.200.110">
    <property type="entry name" value="Inositol-pentakisphosphate 2-kinase, N-lobe"/>
    <property type="match status" value="1"/>
</dbReference>
<dbReference type="InterPro" id="IPR009286">
    <property type="entry name" value="Ins_P5_2-kin"/>
</dbReference>
<dbReference type="InterPro" id="IPR043001">
    <property type="entry name" value="IP5_2-K_N_lobe"/>
</dbReference>
<dbReference type="PANTHER" id="PTHR14456">
    <property type="entry name" value="INOSITOL POLYPHOSPHATE KINASE 1"/>
    <property type="match status" value="1"/>
</dbReference>
<dbReference type="PANTHER" id="PTHR14456:SF2">
    <property type="entry name" value="INOSITOL-PENTAKISPHOSPHATE 2-KINASE"/>
    <property type="match status" value="1"/>
</dbReference>
<dbReference type="Pfam" id="PF06090">
    <property type="entry name" value="Ins_P5_2-kin"/>
    <property type="match status" value="1"/>
</dbReference>
<name>IPK1_ORYSJ</name>
<keyword id="KW-0067">ATP-binding</keyword>
<keyword id="KW-0418">Kinase</keyword>
<keyword id="KW-0479">Metal-binding</keyword>
<keyword id="KW-0547">Nucleotide-binding</keyword>
<keyword id="KW-1185">Reference proteome</keyword>
<keyword id="KW-0808">Transferase</keyword>
<keyword id="KW-0862">Zinc</keyword>
<proteinExistence type="evidence at transcript level"/>
<sequence length="445" mass="49336">MEVVLHEGDAKDWVYKGEGAANLILSYTGSSPSMLGKVLRVKKILKDKGQPAPNCIVFSSHEEHLWGKIPGLLESVKNDCLPQAYATIVMSQHLGANHVDGGVRVRVSKNFFELAGKNVLDNRPAWRVNASAIDAGADSALLISDHTLFSGNPRGSSCIAVEIKAKCGFLPSSEYISKENSIKKQVTRYKMHQHLKFHLGEISKTSEYDPLDLFSGSKERIHMAIKSFFSTPQNNFRIFVDGSLVFGGMGGGADSVHPNETEKCLEDLSKVTGLQLSDFIELLSEAIFKSGVLGKLLATQKLDDHDIEGAIHLYYNIISQPCLVCKSITDTELLRKYSTLHSLPLDKSEKIVRDFLISATAKDCSLMISFRPRQSGTTDSEYDSVFLDSVNQSYDYKAYFIDLDVKPLDKMVHYFKLDQKIVNFYTRNGEVGGDPRDPPKGCGPR</sequence>
<protein>
    <recommendedName>
        <fullName evidence="5">Inositol-pentakisphosphate 2-kinase IPK1</fullName>
        <ecNumber evidence="5">2.7.1.158</ecNumber>
    </recommendedName>
    <alternativeName>
        <fullName evidence="5">Inositol-1,3,4,5,6-pentakisphosphate 2-kinase IPK1</fullName>
        <shortName evidence="4">OsIPK1</shortName>
    </alternativeName>
    <alternativeName>
        <fullName evidence="5">Ins(1,3,4,5,6)P5 2-kinase</fullName>
        <shortName>InsP5 2-kinase 1</shortName>
    </alternativeName>
</protein>
<comment type="function">
    <text evidence="1">Phosphorylates Ins(1,3,4,5,6)P5 at position 2 to form Ins(1,2,3,4,5,6)P6 (InsP6 or phytate). Phytate is a regulator of intracellular signaling, a highly abundant animal antinutrient, and a phosphate store in plant seeds. Also phosphorylates Ins(1,3,4,6)P4 and Ins(1,4,5,6)P4 to produce Ins(1,2,3,4,6)P5 and Ins(1,2,4,5,6)P5.</text>
</comment>
<comment type="catalytic activity">
    <reaction evidence="1">
        <text>1D-myo-inositol 1,3,4,5,6-pentakisphosphate + ATP = 1D-myo-inositol hexakisphosphate + ADP + H(+)</text>
        <dbReference type="Rhea" id="RHEA:20313"/>
        <dbReference type="ChEBI" id="CHEBI:15378"/>
        <dbReference type="ChEBI" id="CHEBI:30616"/>
        <dbReference type="ChEBI" id="CHEBI:57733"/>
        <dbReference type="ChEBI" id="CHEBI:58130"/>
        <dbReference type="ChEBI" id="CHEBI:456216"/>
        <dbReference type="EC" id="2.7.1.158"/>
    </reaction>
</comment>
<comment type="cofactor">
    <cofactor evidence="1">
        <name>Zn(2+)</name>
        <dbReference type="ChEBI" id="CHEBI:29105"/>
    </cofactor>
    <text evidence="1">Binds 1 zinc ion per subunit.</text>
</comment>
<comment type="tissue specificity">
    <text evidence="2">Highly expressed in embryos and at lower levels in roots, leaves, flowers and anthers.</text>
</comment>
<comment type="induction">
    <text evidence="3">By abscisic acid (ABA).</text>
</comment>
<comment type="domain">
    <text evidence="1">The EXKPK motif is conserved in inositol-pentakisphosphate 2-kinases of both family 1 and 2.</text>
</comment>
<comment type="similarity">
    <text evidence="5">Belongs to the IPK1 type 2 family.</text>
</comment>
<gene>
    <name evidence="4" type="primary">IPK1</name>
    <name evidence="6" type="ordered locus">Os04g0661200</name>
    <name evidence="5" type="ordered locus">LOC_Os04g56580</name>
    <name evidence="8" type="ORF">OsJ_16498</name>
    <name evidence="7" type="ORF">OSJNBa0015K02.18</name>
</gene>
<evidence type="ECO:0000250" key="1">
    <source>
        <dbReference type="UniProtKB" id="Q93YN9"/>
    </source>
</evidence>
<evidence type="ECO:0000269" key="2">
    <source>
    </source>
</evidence>
<evidence type="ECO:0000269" key="3">
    <source>
    </source>
</evidence>
<evidence type="ECO:0000303" key="4">
    <source>
    </source>
</evidence>
<evidence type="ECO:0000305" key="5"/>
<evidence type="ECO:0000312" key="6">
    <source>
        <dbReference type="EMBL" id="BAF16061.1"/>
    </source>
</evidence>
<evidence type="ECO:0000312" key="7">
    <source>
        <dbReference type="EMBL" id="CAE02901.1"/>
    </source>
</evidence>
<evidence type="ECO:0000312" key="8">
    <source>
        <dbReference type="EMBL" id="EEE61843.1"/>
    </source>
</evidence>
<evidence type="ECO:0000312" key="9">
    <source>
        <dbReference type="Proteomes" id="UP000059680"/>
    </source>
</evidence>